<sequence length="449" mass="50685">MLSSQTSSIFTVSRLNQTVRLLLEQEMGQVWISGEISNFTQPASGHWYFTLKDDTAQVRCAMFRNSNRRVTFRPQHGQQVLVRANITLYEPRGDYQIIAESMQPAGEGLLQQKYEQLKAKLQAEGLFDQQHKQQLPSPAHCVGVITSKTGAALHDILHVLKRRDPSLPVIIYPTAVQGDDAPGQIVRAIELANARGECDVLIVGRGGGSLEDLWSFNDERVARAIFASRIPVVSAVGHETDVTIADFVADLRAPTPSAAAEIVSRNQQELLRQIQSAQQRLGMAMDYYLANRSRRFTQIFHRLQQQHPQLRLARQQTALERLRQRMGFALEARIKQATQRQQRVSQRLSQQNPQPRIHRAQSRIQQLEYRLTENIRSRLSEQRERFGNAVTHLEAVSPLATLARGYTVSTTTDGKVLKKIKQVKAGDIMTTRLEDGWLESEVKSVTPGT</sequence>
<comment type="function">
    <text evidence="1">Bidirectionally degrades single-stranded DNA into large acid-insoluble oligonucleotides, which are then degraded further into small acid-soluble oligonucleotides.</text>
</comment>
<comment type="catalytic activity">
    <reaction evidence="1">
        <text>Exonucleolytic cleavage in either 5'- to 3'- or 3'- to 5'-direction to yield nucleoside 5'-phosphates.</text>
        <dbReference type="EC" id="3.1.11.6"/>
    </reaction>
</comment>
<comment type="subunit">
    <text evidence="1">Heterooligomer composed of large and small subunits.</text>
</comment>
<comment type="subcellular location">
    <subcellularLocation>
        <location evidence="1">Cytoplasm</location>
    </subcellularLocation>
</comment>
<comment type="similarity">
    <text evidence="1">Belongs to the XseA family.</text>
</comment>
<dbReference type="EC" id="3.1.11.6" evidence="1"/>
<dbReference type="EMBL" id="CP001127">
    <property type="protein sequence ID" value="ACF91638.1"/>
    <property type="molecule type" value="Genomic_DNA"/>
</dbReference>
<dbReference type="RefSeq" id="WP_000953174.1">
    <property type="nucleotide sequence ID" value="NC_011094.1"/>
</dbReference>
<dbReference type="SMR" id="B4TR85"/>
<dbReference type="KEGG" id="sew:SeSA_A2746"/>
<dbReference type="HOGENOM" id="CLU_023625_3_1_6"/>
<dbReference type="Proteomes" id="UP000001865">
    <property type="component" value="Chromosome"/>
</dbReference>
<dbReference type="GO" id="GO:0005737">
    <property type="term" value="C:cytoplasm"/>
    <property type="evidence" value="ECO:0007669"/>
    <property type="project" value="UniProtKB-SubCell"/>
</dbReference>
<dbReference type="GO" id="GO:0009318">
    <property type="term" value="C:exodeoxyribonuclease VII complex"/>
    <property type="evidence" value="ECO:0007669"/>
    <property type="project" value="InterPro"/>
</dbReference>
<dbReference type="GO" id="GO:0008855">
    <property type="term" value="F:exodeoxyribonuclease VII activity"/>
    <property type="evidence" value="ECO:0007669"/>
    <property type="project" value="UniProtKB-UniRule"/>
</dbReference>
<dbReference type="GO" id="GO:0003676">
    <property type="term" value="F:nucleic acid binding"/>
    <property type="evidence" value="ECO:0007669"/>
    <property type="project" value="InterPro"/>
</dbReference>
<dbReference type="GO" id="GO:0006308">
    <property type="term" value="P:DNA catabolic process"/>
    <property type="evidence" value="ECO:0007669"/>
    <property type="project" value="UniProtKB-UniRule"/>
</dbReference>
<dbReference type="CDD" id="cd04489">
    <property type="entry name" value="ExoVII_LU_OBF"/>
    <property type="match status" value="1"/>
</dbReference>
<dbReference type="HAMAP" id="MF_00378">
    <property type="entry name" value="Exonuc_7_L"/>
    <property type="match status" value="1"/>
</dbReference>
<dbReference type="InterPro" id="IPR003753">
    <property type="entry name" value="Exonuc_VII_L"/>
</dbReference>
<dbReference type="InterPro" id="IPR020579">
    <property type="entry name" value="Exonuc_VII_lsu_C"/>
</dbReference>
<dbReference type="InterPro" id="IPR025824">
    <property type="entry name" value="OB-fold_nuc-bd_dom"/>
</dbReference>
<dbReference type="NCBIfam" id="TIGR00237">
    <property type="entry name" value="xseA"/>
    <property type="match status" value="1"/>
</dbReference>
<dbReference type="PANTHER" id="PTHR30008">
    <property type="entry name" value="EXODEOXYRIBONUCLEASE 7 LARGE SUBUNIT"/>
    <property type="match status" value="1"/>
</dbReference>
<dbReference type="PANTHER" id="PTHR30008:SF0">
    <property type="entry name" value="EXODEOXYRIBONUCLEASE 7 LARGE SUBUNIT"/>
    <property type="match status" value="1"/>
</dbReference>
<dbReference type="Pfam" id="PF02601">
    <property type="entry name" value="Exonuc_VII_L"/>
    <property type="match status" value="1"/>
</dbReference>
<dbReference type="Pfam" id="PF13742">
    <property type="entry name" value="tRNA_anti_2"/>
    <property type="match status" value="1"/>
</dbReference>
<proteinExistence type="inferred from homology"/>
<gene>
    <name evidence="1" type="primary">xseA</name>
    <name type="ordered locus">SeSA_A2746</name>
</gene>
<name>EX7L_SALSV</name>
<feature type="chain" id="PRO_1000122087" description="Exodeoxyribonuclease 7 large subunit">
    <location>
        <begin position="1"/>
        <end position="449"/>
    </location>
</feature>
<evidence type="ECO:0000255" key="1">
    <source>
        <dbReference type="HAMAP-Rule" id="MF_00378"/>
    </source>
</evidence>
<accession>B4TR85</accession>
<protein>
    <recommendedName>
        <fullName evidence="1">Exodeoxyribonuclease 7 large subunit</fullName>
        <ecNumber evidence="1">3.1.11.6</ecNumber>
    </recommendedName>
    <alternativeName>
        <fullName evidence="1">Exodeoxyribonuclease VII large subunit</fullName>
        <shortName evidence="1">Exonuclease VII large subunit</shortName>
    </alternativeName>
</protein>
<keyword id="KW-0963">Cytoplasm</keyword>
<keyword id="KW-0269">Exonuclease</keyword>
<keyword id="KW-0378">Hydrolase</keyword>
<keyword id="KW-0540">Nuclease</keyword>
<organism>
    <name type="scientific">Salmonella schwarzengrund (strain CVM19633)</name>
    <dbReference type="NCBI Taxonomy" id="439843"/>
    <lineage>
        <taxon>Bacteria</taxon>
        <taxon>Pseudomonadati</taxon>
        <taxon>Pseudomonadota</taxon>
        <taxon>Gammaproteobacteria</taxon>
        <taxon>Enterobacterales</taxon>
        <taxon>Enterobacteriaceae</taxon>
        <taxon>Salmonella</taxon>
    </lineage>
</organism>
<reference key="1">
    <citation type="journal article" date="2011" name="J. Bacteriol.">
        <title>Comparative genomics of 28 Salmonella enterica isolates: evidence for CRISPR-mediated adaptive sublineage evolution.</title>
        <authorList>
            <person name="Fricke W.F."/>
            <person name="Mammel M.K."/>
            <person name="McDermott P.F."/>
            <person name="Tartera C."/>
            <person name="White D.G."/>
            <person name="Leclerc J.E."/>
            <person name="Ravel J."/>
            <person name="Cebula T.A."/>
        </authorList>
    </citation>
    <scope>NUCLEOTIDE SEQUENCE [LARGE SCALE GENOMIC DNA]</scope>
    <source>
        <strain>CVM19633</strain>
    </source>
</reference>